<protein>
    <recommendedName>
        <fullName>Probable dipeptidase B</fullName>
        <ecNumber>3.4.13.19</ecNumber>
    </recommendedName>
</protein>
<dbReference type="EC" id="3.4.13.19"/>
<dbReference type="EMBL" id="AE005176">
    <property type="protein sequence ID" value="AAK05656.1"/>
    <property type="molecule type" value="Genomic_DNA"/>
</dbReference>
<dbReference type="PIR" id="F86819">
    <property type="entry name" value="F86819"/>
</dbReference>
<dbReference type="RefSeq" id="NP_267714.1">
    <property type="nucleotide sequence ID" value="NC_002662.1"/>
</dbReference>
<dbReference type="RefSeq" id="WP_003130696.1">
    <property type="nucleotide sequence ID" value="NC_002662.1"/>
</dbReference>
<dbReference type="SMR" id="Q9CFC3"/>
<dbReference type="MEROPS" id="C69.001"/>
<dbReference type="PaxDb" id="272623-L324"/>
<dbReference type="EnsemblBacteria" id="AAK05656">
    <property type="protein sequence ID" value="AAK05656"/>
    <property type="gene ID" value="L324"/>
</dbReference>
<dbReference type="KEGG" id="lla:L324"/>
<dbReference type="PATRIC" id="fig|272623.7.peg.1676"/>
<dbReference type="eggNOG" id="COG4690">
    <property type="taxonomic scope" value="Bacteria"/>
</dbReference>
<dbReference type="HOGENOM" id="CLU_014823_4_1_9"/>
<dbReference type="OrthoDB" id="9764088at2"/>
<dbReference type="Proteomes" id="UP000002196">
    <property type="component" value="Chromosome"/>
</dbReference>
<dbReference type="GO" id="GO:0070004">
    <property type="term" value="F:cysteine-type exopeptidase activity"/>
    <property type="evidence" value="ECO:0007669"/>
    <property type="project" value="InterPro"/>
</dbReference>
<dbReference type="GO" id="GO:0016805">
    <property type="term" value="F:dipeptidase activity"/>
    <property type="evidence" value="ECO:0007669"/>
    <property type="project" value="UniProtKB-KW"/>
</dbReference>
<dbReference type="GO" id="GO:0006508">
    <property type="term" value="P:proteolysis"/>
    <property type="evidence" value="ECO:0007669"/>
    <property type="project" value="UniProtKB-KW"/>
</dbReference>
<dbReference type="Gene3D" id="3.60.60.10">
    <property type="entry name" value="Penicillin V Acylase, Chain A"/>
    <property type="match status" value="1"/>
</dbReference>
<dbReference type="InterPro" id="IPR047804">
    <property type="entry name" value="C69_dipept_A-like"/>
</dbReference>
<dbReference type="InterPro" id="IPR005322">
    <property type="entry name" value="Peptidase_C69"/>
</dbReference>
<dbReference type="NCBIfam" id="NF033678">
    <property type="entry name" value="C69_fam_dipept"/>
    <property type="match status" value="1"/>
</dbReference>
<dbReference type="PANTHER" id="PTHR12994:SF17">
    <property type="entry name" value="LD30995P"/>
    <property type="match status" value="1"/>
</dbReference>
<dbReference type="PANTHER" id="PTHR12994">
    <property type="entry name" value="SECERNIN"/>
    <property type="match status" value="1"/>
</dbReference>
<dbReference type="Pfam" id="PF03577">
    <property type="entry name" value="Peptidase_C69"/>
    <property type="match status" value="1"/>
</dbReference>
<comment type="catalytic activity">
    <reaction>
        <text>an L-aminoacyl-L-amino acid + H2O = 2 an L-alpha-amino acid</text>
        <dbReference type="Rhea" id="RHEA:48940"/>
        <dbReference type="ChEBI" id="CHEBI:15377"/>
        <dbReference type="ChEBI" id="CHEBI:59869"/>
        <dbReference type="ChEBI" id="CHEBI:77460"/>
        <dbReference type="EC" id="3.4.13.19"/>
    </reaction>
</comment>
<comment type="similarity">
    <text evidence="2">Belongs to the peptidase C69 family.</text>
</comment>
<accession>Q9CFC3</accession>
<keyword id="KW-0224">Dipeptidase</keyword>
<keyword id="KW-0378">Hydrolase</keyword>
<keyword id="KW-0645">Protease</keyword>
<keyword id="KW-1185">Reference proteome</keyword>
<gene>
    <name type="primary">pepDB</name>
    <name type="ordered locus">LL1558</name>
    <name type="ORF">L324</name>
</gene>
<evidence type="ECO:0000255" key="1"/>
<evidence type="ECO:0000305" key="2"/>
<sequence length="474" mass="53689">MKIENRRKGSCTTVLVGRKASIDGSTMIARNDDGHEALDPQRFIVIQPEEQPRHYKAVLSDLELDLPENPLRYTSTPNAVLKEGIWPAAGINSANVAMSATETITTNPRILGLDPYVENGMGEEDLVTLVLPYIKSAREGVERLGQLLKTYGTYEPNGIAFADKEEVWWLETIGGHHWAAVRIPDDSYVVAPNRMNIDEFKFDNDDYMCSSDLKQLIDANHLNPDFEGYESHYNLRHIFGSSSIKDSVYNNPRTWYGQNFLGNPSEDPQNQELPFICEASRKITVEDVKFVLSSHFENTKYDPYGSTNSPEERKLFRPIGINRNHSVHILQVRNNVPDELAGVQWLAFGANTFNHVVPFYTAINDTPASYRDAKGEYDPTNMYWLSATTAVLGDSNYDLFVDLRNTFELNTMAKFHEIQNETDKNFETAEDKIAYLTQANEKLAEAAFKAQTELLGRMVVLGSANMKLRFDFND</sequence>
<proteinExistence type="inferred from homology"/>
<organism>
    <name type="scientific">Lactococcus lactis subsp. lactis (strain IL1403)</name>
    <name type="common">Streptococcus lactis</name>
    <dbReference type="NCBI Taxonomy" id="272623"/>
    <lineage>
        <taxon>Bacteria</taxon>
        <taxon>Bacillati</taxon>
        <taxon>Bacillota</taxon>
        <taxon>Bacilli</taxon>
        <taxon>Lactobacillales</taxon>
        <taxon>Streptococcaceae</taxon>
        <taxon>Lactococcus</taxon>
    </lineage>
</organism>
<reference key="1">
    <citation type="journal article" date="2001" name="Genome Res.">
        <title>The complete genome sequence of the lactic acid bacterium Lactococcus lactis ssp. lactis IL1403.</title>
        <authorList>
            <person name="Bolotin A."/>
            <person name="Wincker P."/>
            <person name="Mauger S."/>
            <person name="Jaillon O."/>
            <person name="Malarme K."/>
            <person name="Weissenbach J."/>
            <person name="Ehrlich S.D."/>
            <person name="Sorokin A."/>
        </authorList>
    </citation>
    <scope>NUCLEOTIDE SEQUENCE [LARGE SCALE GENOMIC DNA]</scope>
    <source>
        <strain>IL1403</strain>
    </source>
</reference>
<name>PEPDB_LACLA</name>
<feature type="chain" id="PRO_0000220383" description="Probable dipeptidase B">
    <location>
        <begin position="1"/>
        <end position="474"/>
    </location>
</feature>
<feature type="active site" evidence="1">
    <location>
        <position position="11"/>
    </location>
</feature>